<protein>
    <recommendedName>
        <fullName>Uncharacterized protein y4jF</fullName>
    </recommendedName>
</protein>
<sequence>MALANFIDRAATAASQVLTDFHLGDFKAALEKQVVAVAFDDQAASCAEGQATLDLAVRLLARLYPVLAILPLDSASSFQAQALERLAKSINPKIGIRRSGKSAMVCLVAGATRPSLRCTTFFIGSDGWAAKLSRTDPVGSGSSLLPYGAGAASCFGAANVFRTIFAAQLTGAELDPDIDLSLYSYNKTKARDARPVDLPVDLGETHLVGLGAIGHGALWALARQSGLSGRLHVVDHEAVELSNLQRYVLAGQAEIGMSKAVLATTALRSTALEVEAHPLKWAEHVARRGDWIFDRVGVALDTAADRLAVQGALPRWIANAWTQEHDLGISRHGFDDGQACLCCMYMPSGKSKDEHQLIAEELGIPETHEQVKALLQTNAGVPNDFVVRVATAMGVPFEPLAPFVGQPLRSFYQQAICGGLVFQLSDGSRLVRTVVPMAFQSALAGIMLAAELVKHSAGFPMSPTTSTRVNLLRPLGSHLHDPKAKDSSGRCICSDEDFISAYRRKYGNSVEPLSNISAT</sequence>
<gene>
    <name type="ordered locus">NGR_a03090</name>
    <name type="ORF">y4jF</name>
</gene>
<organism>
    <name type="scientific">Sinorhizobium fredii (strain NBRC 101917 / NGR234)</name>
    <dbReference type="NCBI Taxonomy" id="394"/>
    <lineage>
        <taxon>Bacteria</taxon>
        <taxon>Pseudomonadati</taxon>
        <taxon>Pseudomonadota</taxon>
        <taxon>Alphaproteobacteria</taxon>
        <taxon>Hyphomicrobiales</taxon>
        <taxon>Rhizobiaceae</taxon>
        <taxon>Sinorhizobium/Ensifer group</taxon>
        <taxon>Sinorhizobium</taxon>
    </lineage>
</organism>
<keyword id="KW-1003">Cell membrane</keyword>
<keyword id="KW-0472">Membrane</keyword>
<keyword id="KW-0614">Plasmid</keyword>
<keyword id="KW-1185">Reference proteome</keyword>
<keyword id="KW-0812">Transmembrane</keyword>
<keyword id="KW-1133">Transmembrane helix</keyword>
<geneLocation type="plasmid">
    <name>sym pNGR234a</name>
</geneLocation>
<evidence type="ECO:0000255" key="1"/>
<proteinExistence type="predicted"/>
<reference key="1">
    <citation type="journal article" date="1997" name="Nature">
        <title>Molecular basis of symbiosis between Rhizobium and legumes.</title>
        <authorList>
            <person name="Freiberg C.A."/>
            <person name="Fellay R."/>
            <person name="Bairoch A."/>
            <person name="Broughton W.J."/>
            <person name="Rosenthal A."/>
            <person name="Perret X."/>
        </authorList>
    </citation>
    <scope>NUCLEOTIDE SEQUENCE [LARGE SCALE GENOMIC DNA]</scope>
    <source>
        <strain>NBRC 101917 / NGR234</strain>
    </source>
</reference>
<reference key="2">
    <citation type="journal article" date="2009" name="Appl. Environ. Microbiol.">
        <title>Rhizobium sp. strain NGR234 possesses a remarkable number of secretion systems.</title>
        <authorList>
            <person name="Schmeisser C."/>
            <person name="Liesegang H."/>
            <person name="Krysciak D."/>
            <person name="Bakkou N."/>
            <person name="Le Quere A."/>
            <person name="Wollherr A."/>
            <person name="Heinemeyer I."/>
            <person name="Morgenstern B."/>
            <person name="Pommerening-Roeser A."/>
            <person name="Flores M."/>
            <person name="Palacios R."/>
            <person name="Brenner S."/>
            <person name="Gottschalk G."/>
            <person name="Schmitz R.A."/>
            <person name="Broughton W.J."/>
            <person name="Perret X."/>
            <person name="Strittmatter A.W."/>
            <person name="Streit W.R."/>
        </authorList>
    </citation>
    <scope>NUCLEOTIDE SEQUENCE [LARGE SCALE GENOMIC DNA]</scope>
    <source>
        <strain>NBRC 101917 / NGR234</strain>
    </source>
</reference>
<accession>P55506</accession>
<dbReference type="EMBL" id="U00090">
    <property type="protein sequence ID" value="AAB91718.1"/>
    <property type="molecule type" value="Genomic_DNA"/>
</dbReference>
<dbReference type="RefSeq" id="NP_443916.1">
    <property type="nucleotide sequence ID" value="NC_000914.2"/>
</dbReference>
<dbReference type="RefSeq" id="WP_010875330.1">
    <property type="nucleotide sequence ID" value="NC_000914.2"/>
</dbReference>
<dbReference type="SMR" id="P55506"/>
<dbReference type="KEGG" id="rhi:NGR_a03090"/>
<dbReference type="PATRIC" id="fig|394.7.peg.319"/>
<dbReference type="eggNOG" id="COG0476">
    <property type="taxonomic scope" value="Bacteria"/>
</dbReference>
<dbReference type="HOGENOM" id="CLU_524659_0_0_5"/>
<dbReference type="OrthoDB" id="9804427at2"/>
<dbReference type="Proteomes" id="UP000001054">
    <property type="component" value="Plasmid pNGR234a"/>
</dbReference>
<dbReference type="GO" id="GO:0005886">
    <property type="term" value="C:plasma membrane"/>
    <property type="evidence" value="ECO:0007669"/>
    <property type="project" value="UniProtKB-SubCell"/>
</dbReference>
<dbReference type="GO" id="GO:0008641">
    <property type="term" value="F:ubiquitin-like modifier activating enzyme activity"/>
    <property type="evidence" value="ECO:0007669"/>
    <property type="project" value="InterPro"/>
</dbReference>
<dbReference type="CDD" id="cd01483">
    <property type="entry name" value="E1_enzyme_family"/>
    <property type="match status" value="1"/>
</dbReference>
<dbReference type="Gene3D" id="3.40.50.720">
    <property type="entry name" value="NAD(P)-binding Rossmann-like Domain"/>
    <property type="match status" value="1"/>
</dbReference>
<dbReference type="InterPro" id="IPR032864">
    <property type="entry name" value="Prok-E2_C"/>
</dbReference>
<dbReference type="InterPro" id="IPR000594">
    <property type="entry name" value="ThiF_NAD_FAD-bd"/>
</dbReference>
<dbReference type="InterPro" id="IPR035985">
    <property type="entry name" value="Ubiquitin-activating_enz"/>
</dbReference>
<dbReference type="Pfam" id="PF14459">
    <property type="entry name" value="Prok-E2_C"/>
    <property type="match status" value="1"/>
</dbReference>
<dbReference type="Pfam" id="PF00899">
    <property type="entry name" value="ThiF"/>
    <property type="match status" value="1"/>
</dbReference>
<dbReference type="SUPFAM" id="SSF69572">
    <property type="entry name" value="Activating enzymes of the ubiquitin-like proteins"/>
    <property type="match status" value="1"/>
</dbReference>
<comment type="subcellular location">
    <subcellularLocation>
        <location>Cell membrane</location>
        <topology>Multi-pass membrane protein</topology>
    </subcellularLocation>
</comment>
<name>Y4JF_SINFN</name>
<feature type="chain" id="PRO_0000200872" description="Uncharacterized protein y4jF">
    <location>
        <begin position="1"/>
        <end position="519"/>
    </location>
</feature>
<feature type="transmembrane region" description="Helical" evidence="1">
    <location>
        <begin position="141"/>
        <end position="161"/>
    </location>
</feature>
<feature type="transmembrane region" description="Helical" evidence="1">
    <location>
        <begin position="202"/>
        <end position="222"/>
    </location>
</feature>
<feature type="transmembrane region" description="Helical" evidence="1">
    <location>
        <begin position="385"/>
        <end position="405"/>
    </location>
</feature>
<feature type="transmembrane region" description="Helical" evidence="1">
    <location>
        <begin position="433"/>
        <end position="453"/>
    </location>
</feature>